<organism>
    <name type="scientific">Limosilactobacillus reuteri subsp. reuteri (strain JCM 1112)</name>
    <name type="common">Lactobacillus reuteri</name>
    <dbReference type="NCBI Taxonomy" id="557433"/>
    <lineage>
        <taxon>Bacteria</taxon>
        <taxon>Bacillati</taxon>
        <taxon>Bacillota</taxon>
        <taxon>Bacilli</taxon>
        <taxon>Lactobacillales</taxon>
        <taxon>Lactobacillaceae</taxon>
        <taxon>Limosilactobacillus</taxon>
    </lineage>
</organism>
<protein>
    <recommendedName>
        <fullName evidence="1">Uridine kinase</fullName>
        <ecNumber evidence="1">2.7.1.48</ecNumber>
    </recommendedName>
    <alternativeName>
        <fullName evidence="1">Cytidine monophosphokinase</fullName>
    </alternativeName>
    <alternativeName>
        <fullName evidence="1">Uridine monophosphokinase</fullName>
    </alternativeName>
</protein>
<keyword id="KW-0067">ATP-binding</keyword>
<keyword id="KW-0963">Cytoplasm</keyword>
<keyword id="KW-0418">Kinase</keyword>
<keyword id="KW-0547">Nucleotide-binding</keyword>
<keyword id="KW-0808">Transferase</keyword>
<proteinExistence type="inferred from homology"/>
<feature type="chain" id="PRO_1000129079" description="Uridine kinase">
    <location>
        <begin position="1"/>
        <end position="218"/>
    </location>
</feature>
<feature type="binding site" evidence="1">
    <location>
        <begin position="16"/>
        <end position="23"/>
    </location>
    <ligand>
        <name>ATP</name>
        <dbReference type="ChEBI" id="CHEBI:30616"/>
    </ligand>
</feature>
<accession>B2G882</accession>
<comment type="catalytic activity">
    <reaction evidence="1">
        <text>uridine + ATP = UMP + ADP + H(+)</text>
        <dbReference type="Rhea" id="RHEA:16825"/>
        <dbReference type="ChEBI" id="CHEBI:15378"/>
        <dbReference type="ChEBI" id="CHEBI:16704"/>
        <dbReference type="ChEBI" id="CHEBI:30616"/>
        <dbReference type="ChEBI" id="CHEBI:57865"/>
        <dbReference type="ChEBI" id="CHEBI:456216"/>
        <dbReference type="EC" id="2.7.1.48"/>
    </reaction>
</comment>
<comment type="catalytic activity">
    <reaction evidence="1">
        <text>cytidine + ATP = CMP + ADP + H(+)</text>
        <dbReference type="Rhea" id="RHEA:24674"/>
        <dbReference type="ChEBI" id="CHEBI:15378"/>
        <dbReference type="ChEBI" id="CHEBI:17562"/>
        <dbReference type="ChEBI" id="CHEBI:30616"/>
        <dbReference type="ChEBI" id="CHEBI:60377"/>
        <dbReference type="ChEBI" id="CHEBI:456216"/>
        <dbReference type="EC" id="2.7.1.48"/>
    </reaction>
</comment>
<comment type="pathway">
    <text evidence="1">Pyrimidine metabolism; CTP biosynthesis via salvage pathway; CTP from cytidine: step 1/3.</text>
</comment>
<comment type="pathway">
    <text evidence="1">Pyrimidine metabolism; UMP biosynthesis via salvage pathway; UMP from uridine: step 1/1.</text>
</comment>
<comment type="subcellular location">
    <subcellularLocation>
        <location evidence="1">Cytoplasm</location>
    </subcellularLocation>
</comment>
<comment type="similarity">
    <text evidence="1">Belongs to the uridine kinase family.</text>
</comment>
<gene>
    <name evidence="1" type="primary">udk</name>
    <name type="ordered locus">LAR_1148</name>
</gene>
<sequence length="218" mass="25135">MSIQQNKRPVVIGVTGGSGSGKTTVSNKIYDQLHGQAIQIINQDTYYNDQSDMTMDERKAVNYDHPLAFDTDFLIKQLTDLRSNKAIEMPVYDYTQYTRSDKTVHVEPTDVIILEGILILDDERLRDLMDIKVYVDTDDDIRIIRRIQRDMVERGRSLDSIITQYLATVKPMYHQFVEPTKRYADIIVPEGGENQVAIDLLSTKIRDILVKRGHTELR</sequence>
<reference key="1">
    <citation type="journal article" date="2008" name="DNA Res.">
        <title>Comparative genome analysis of Lactobacillus reuteri and Lactobacillus fermentum reveal a genomic island for reuterin and cobalamin production.</title>
        <authorList>
            <person name="Morita H."/>
            <person name="Toh H."/>
            <person name="Fukuda S."/>
            <person name="Horikawa H."/>
            <person name="Oshima K."/>
            <person name="Suzuki T."/>
            <person name="Murakami M."/>
            <person name="Hisamatsu S."/>
            <person name="Kato Y."/>
            <person name="Takizawa T."/>
            <person name="Fukuoka H."/>
            <person name="Yoshimura T."/>
            <person name="Itoh K."/>
            <person name="O'Sullivan D.J."/>
            <person name="McKay L.L."/>
            <person name="Ohno H."/>
            <person name="Kikuchi J."/>
            <person name="Masaoka T."/>
            <person name="Hattori M."/>
        </authorList>
    </citation>
    <scope>NUCLEOTIDE SEQUENCE [LARGE SCALE GENOMIC DNA]</scope>
    <source>
        <strain>JCM 1112</strain>
    </source>
</reference>
<name>URK_LIMRJ</name>
<dbReference type="EC" id="2.7.1.48" evidence="1"/>
<dbReference type="EMBL" id="AP007281">
    <property type="protein sequence ID" value="BAG25664.1"/>
    <property type="molecule type" value="Genomic_DNA"/>
</dbReference>
<dbReference type="RefSeq" id="WP_003668449.1">
    <property type="nucleotide sequence ID" value="NC_010609.1"/>
</dbReference>
<dbReference type="SMR" id="B2G882"/>
<dbReference type="KEGG" id="lrf:LAR_1148"/>
<dbReference type="HOGENOM" id="CLU_021278_1_2_9"/>
<dbReference type="UniPathway" id="UPA00574">
    <property type="reaction ID" value="UER00637"/>
</dbReference>
<dbReference type="UniPathway" id="UPA00579">
    <property type="reaction ID" value="UER00640"/>
</dbReference>
<dbReference type="GO" id="GO:0005737">
    <property type="term" value="C:cytoplasm"/>
    <property type="evidence" value="ECO:0007669"/>
    <property type="project" value="UniProtKB-SubCell"/>
</dbReference>
<dbReference type="GO" id="GO:0005524">
    <property type="term" value="F:ATP binding"/>
    <property type="evidence" value="ECO:0007669"/>
    <property type="project" value="UniProtKB-UniRule"/>
</dbReference>
<dbReference type="GO" id="GO:0043771">
    <property type="term" value="F:cytidine kinase activity"/>
    <property type="evidence" value="ECO:0007669"/>
    <property type="project" value="RHEA"/>
</dbReference>
<dbReference type="GO" id="GO:0004849">
    <property type="term" value="F:uridine kinase activity"/>
    <property type="evidence" value="ECO:0007669"/>
    <property type="project" value="UniProtKB-UniRule"/>
</dbReference>
<dbReference type="GO" id="GO:0044211">
    <property type="term" value="P:CTP salvage"/>
    <property type="evidence" value="ECO:0007669"/>
    <property type="project" value="UniProtKB-UniRule"/>
</dbReference>
<dbReference type="GO" id="GO:0044206">
    <property type="term" value="P:UMP salvage"/>
    <property type="evidence" value="ECO:0007669"/>
    <property type="project" value="UniProtKB-UniRule"/>
</dbReference>
<dbReference type="CDD" id="cd02023">
    <property type="entry name" value="UMPK"/>
    <property type="match status" value="1"/>
</dbReference>
<dbReference type="FunFam" id="3.40.50.300:FF:000339">
    <property type="entry name" value="Uridine kinase"/>
    <property type="match status" value="1"/>
</dbReference>
<dbReference type="Gene3D" id="3.40.50.300">
    <property type="entry name" value="P-loop containing nucleotide triphosphate hydrolases"/>
    <property type="match status" value="1"/>
</dbReference>
<dbReference type="HAMAP" id="MF_00551">
    <property type="entry name" value="Uridine_kinase"/>
    <property type="match status" value="1"/>
</dbReference>
<dbReference type="InterPro" id="IPR027417">
    <property type="entry name" value="P-loop_NTPase"/>
</dbReference>
<dbReference type="InterPro" id="IPR006083">
    <property type="entry name" value="PRK/URK"/>
</dbReference>
<dbReference type="InterPro" id="IPR026008">
    <property type="entry name" value="Uridine_kinase"/>
</dbReference>
<dbReference type="InterPro" id="IPR000764">
    <property type="entry name" value="Uridine_kinase-like"/>
</dbReference>
<dbReference type="NCBIfam" id="NF004018">
    <property type="entry name" value="PRK05480.1"/>
    <property type="match status" value="1"/>
</dbReference>
<dbReference type="NCBIfam" id="TIGR00235">
    <property type="entry name" value="udk"/>
    <property type="match status" value="1"/>
</dbReference>
<dbReference type="PANTHER" id="PTHR10285">
    <property type="entry name" value="URIDINE KINASE"/>
    <property type="match status" value="1"/>
</dbReference>
<dbReference type="Pfam" id="PF00485">
    <property type="entry name" value="PRK"/>
    <property type="match status" value="1"/>
</dbReference>
<dbReference type="PRINTS" id="PR00988">
    <property type="entry name" value="URIDINKINASE"/>
</dbReference>
<dbReference type="SUPFAM" id="SSF52540">
    <property type="entry name" value="P-loop containing nucleoside triphosphate hydrolases"/>
    <property type="match status" value="1"/>
</dbReference>
<evidence type="ECO:0000255" key="1">
    <source>
        <dbReference type="HAMAP-Rule" id="MF_00551"/>
    </source>
</evidence>